<feature type="chain" id="PRO_1000017814" description="Methylglyoxal synthase">
    <location>
        <begin position="1"/>
        <end position="153"/>
    </location>
</feature>
<feature type="domain" description="MGS-like" evidence="1">
    <location>
        <begin position="3"/>
        <end position="153"/>
    </location>
</feature>
<feature type="active site" description="Proton donor/acceptor" evidence="1">
    <location>
        <position position="71"/>
    </location>
</feature>
<feature type="binding site" evidence="1">
    <location>
        <position position="19"/>
    </location>
    <ligand>
        <name>substrate</name>
    </ligand>
</feature>
<feature type="binding site" evidence="1">
    <location>
        <position position="23"/>
    </location>
    <ligand>
        <name>substrate</name>
    </ligand>
</feature>
<feature type="binding site" evidence="1">
    <location>
        <begin position="45"/>
        <end position="48"/>
    </location>
    <ligand>
        <name>substrate</name>
    </ligand>
</feature>
<feature type="binding site" evidence="1">
    <location>
        <begin position="65"/>
        <end position="66"/>
    </location>
    <ligand>
        <name>substrate</name>
    </ligand>
</feature>
<feature type="binding site" evidence="1">
    <location>
        <position position="98"/>
    </location>
    <ligand>
        <name>substrate</name>
    </ligand>
</feature>
<organism>
    <name type="scientific">Hahella chejuensis (strain KCTC 2396)</name>
    <dbReference type="NCBI Taxonomy" id="349521"/>
    <lineage>
        <taxon>Bacteria</taxon>
        <taxon>Pseudomonadati</taxon>
        <taxon>Pseudomonadota</taxon>
        <taxon>Gammaproteobacteria</taxon>
        <taxon>Oceanospirillales</taxon>
        <taxon>Hahellaceae</taxon>
        <taxon>Hahella</taxon>
    </lineage>
</organism>
<sequence>MTDQVNRPKGVTSVALIAHDNKKADLIAWVEKNSVKLNKCTVYATGTTGKLIAEKTGVDVKRCHSGPLGGDQQIGALISEGKVDLLIFFWDPLEPMPHDPDIKALLRLATLWNVPSACNSATADFLVNSNLFEEFLPQRPDFDSYLSRDVPGN</sequence>
<proteinExistence type="inferred from homology"/>
<gene>
    <name evidence="1" type="primary">mgsA</name>
    <name type="ordered locus">HCH_02120</name>
</gene>
<protein>
    <recommendedName>
        <fullName evidence="1">Methylglyoxal synthase</fullName>
        <shortName evidence="1">MGS</shortName>
        <ecNumber evidence="1">4.2.3.3</ecNumber>
    </recommendedName>
</protein>
<accession>Q2SK75</accession>
<comment type="function">
    <text evidence="1">Catalyzes the formation of methylglyoxal from dihydroxyacetone phosphate.</text>
</comment>
<comment type="catalytic activity">
    <reaction evidence="1">
        <text>dihydroxyacetone phosphate = methylglyoxal + phosphate</text>
        <dbReference type="Rhea" id="RHEA:17937"/>
        <dbReference type="ChEBI" id="CHEBI:17158"/>
        <dbReference type="ChEBI" id="CHEBI:43474"/>
        <dbReference type="ChEBI" id="CHEBI:57642"/>
        <dbReference type="EC" id="4.2.3.3"/>
    </reaction>
</comment>
<comment type="similarity">
    <text evidence="1">Belongs to the methylglyoxal synthase family.</text>
</comment>
<name>MGSA_HAHCH</name>
<evidence type="ECO:0000255" key="1">
    <source>
        <dbReference type="HAMAP-Rule" id="MF_00549"/>
    </source>
</evidence>
<keyword id="KW-0456">Lyase</keyword>
<keyword id="KW-1185">Reference proteome</keyword>
<dbReference type="EC" id="4.2.3.3" evidence="1"/>
<dbReference type="EMBL" id="CP000155">
    <property type="protein sequence ID" value="ABC28949.1"/>
    <property type="molecule type" value="Genomic_DNA"/>
</dbReference>
<dbReference type="RefSeq" id="WP_011396020.1">
    <property type="nucleotide sequence ID" value="NC_007645.1"/>
</dbReference>
<dbReference type="SMR" id="Q2SK75"/>
<dbReference type="STRING" id="349521.HCH_02120"/>
<dbReference type="KEGG" id="hch:HCH_02120"/>
<dbReference type="eggNOG" id="COG1803">
    <property type="taxonomic scope" value="Bacteria"/>
</dbReference>
<dbReference type="HOGENOM" id="CLU_120420_0_1_6"/>
<dbReference type="OrthoDB" id="9787147at2"/>
<dbReference type="Proteomes" id="UP000000238">
    <property type="component" value="Chromosome"/>
</dbReference>
<dbReference type="GO" id="GO:0005829">
    <property type="term" value="C:cytosol"/>
    <property type="evidence" value="ECO:0007669"/>
    <property type="project" value="TreeGrafter"/>
</dbReference>
<dbReference type="GO" id="GO:0008929">
    <property type="term" value="F:methylglyoxal synthase activity"/>
    <property type="evidence" value="ECO:0007669"/>
    <property type="project" value="UniProtKB-UniRule"/>
</dbReference>
<dbReference type="GO" id="GO:0019242">
    <property type="term" value="P:methylglyoxal biosynthetic process"/>
    <property type="evidence" value="ECO:0007669"/>
    <property type="project" value="UniProtKB-UniRule"/>
</dbReference>
<dbReference type="CDD" id="cd01422">
    <property type="entry name" value="MGS"/>
    <property type="match status" value="1"/>
</dbReference>
<dbReference type="Gene3D" id="3.40.50.1380">
    <property type="entry name" value="Methylglyoxal synthase-like domain"/>
    <property type="match status" value="1"/>
</dbReference>
<dbReference type="HAMAP" id="MF_00549">
    <property type="entry name" value="Methylglyoxal_synth"/>
    <property type="match status" value="1"/>
</dbReference>
<dbReference type="InterPro" id="IPR004363">
    <property type="entry name" value="Methylgl_synth"/>
</dbReference>
<dbReference type="InterPro" id="IPR018148">
    <property type="entry name" value="Methylglyoxal_synth_AS"/>
</dbReference>
<dbReference type="InterPro" id="IPR011607">
    <property type="entry name" value="MGS-like_dom"/>
</dbReference>
<dbReference type="InterPro" id="IPR036914">
    <property type="entry name" value="MGS-like_dom_sf"/>
</dbReference>
<dbReference type="NCBIfam" id="TIGR00160">
    <property type="entry name" value="MGSA"/>
    <property type="match status" value="1"/>
</dbReference>
<dbReference type="NCBIfam" id="NF003559">
    <property type="entry name" value="PRK05234.1"/>
    <property type="match status" value="1"/>
</dbReference>
<dbReference type="PANTHER" id="PTHR30492">
    <property type="entry name" value="METHYLGLYOXAL SYNTHASE"/>
    <property type="match status" value="1"/>
</dbReference>
<dbReference type="PANTHER" id="PTHR30492:SF0">
    <property type="entry name" value="METHYLGLYOXAL SYNTHASE"/>
    <property type="match status" value="1"/>
</dbReference>
<dbReference type="Pfam" id="PF02142">
    <property type="entry name" value="MGS"/>
    <property type="match status" value="1"/>
</dbReference>
<dbReference type="PIRSF" id="PIRSF006614">
    <property type="entry name" value="Methylglyox_syn"/>
    <property type="match status" value="1"/>
</dbReference>
<dbReference type="SMART" id="SM00851">
    <property type="entry name" value="MGS"/>
    <property type="match status" value="1"/>
</dbReference>
<dbReference type="SUPFAM" id="SSF52335">
    <property type="entry name" value="Methylglyoxal synthase-like"/>
    <property type="match status" value="1"/>
</dbReference>
<dbReference type="PROSITE" id="PS01335">
    <property type="entry name" value="METHYLGLYOXAL_SYNTH"/>
    <property type="match status" value="1"/>
</dbReference>
<dbReference type="PROSITE" id="PS51855">
    <property type="entry name" value="MGS"/>
    <property type="match status" value="1"/>
</dbReference>
<reference key="1">
    <citation type="journal article" date="2005" name="Nucleic Acids Res.">
        <title>Genomic blueprint of Hahella chejuensis, a marine microbe producing an algicidal agent.</title>
        <authorList>
            <person name="Jeong H."/>
            <person name="Yim J.H."/>
            <person name="Lee C."/>
            <person name="Choi S.-H."/>
            <person name="Park Y.K."/>
            <person name="Yoon S.H."/>
            <person name="Hur C.-G."/>
            <person name="Kang H.-Y."/>
            <person name="Kim D."/>
            <person name="Lee H.H."/>
            <person name="Park K.H."/>
            <person name="Park S.-H."/>
            <person name="Park H.-S."/>
            <person name="Lee H.K."/>
            <person name="Oh T.K."/>
            <person name="Kim J.F."/>
        </authorList>
    </citation>
    <scope>NUCLEOTIDE SEQUENCE [LARGE SCALE GENOMIC DNA]</scope>
    <source>
        <strain>KCTC 2396</strain>
    </source>
</reference>